<name>KCNH2_RABIT</name>
<gene>
    <name evidence="3" type="primary">KCNH2</name>
    <name type="synonym">ERG</name>
</gene>
<proteinExistence type="evidence at transcript level"/>
<accession>Q8WNY2</accession>
<accession>O02731</accession>
<accession>O19119</accession>
<accession>O97586</accession>
<accession>Q9TV06</accession>
<evidence type="ECO:0000250" key="1">
    <source>
        <dbReference type="UniProtKB" id="O08962"/>
    </source>
</evidence>
<evidence type="ECO:0000250" key="2">
    <source>
        <dbReference type="UniProtKB" id="O35219"/>
    </source>
</evidence>
<evidence type="ECO:0000250" key="3">
    <source>
        <dbReference type="UniProtKB" id="Q12809"/>
    </source>
</evidence>
<evidence type="ECO:0000250" key="4">
    <source>
        <dbReference type="UniProtKB" id="Q63472"/>
    </source>
</evidence>
<evidence type="ECO:0000255" key="5"/>
<evidence type="ECO:0000255" key="6">
    <source>
        <dbReference type="PROSITE-ProRule" id="PRU00060"/>
    </source>
</evidence>
<evidence type="ECO:0000255" key="7">
    <source>
        <dbReference type="PROSITE-ProRule" id="PRU00140"/>
    </source>
</evidence>
<evidence type="ECO:0000255" key="8">
    <source>
        <dbReference type="PROSITE-ProRule" id="PRU00141"/>
    </source>
</evidence>
<evidence type="ECO:0000256" key="9">
    <source>
        <dbReference type="SAM" id="MobiDB-lite"/>
    </source>
</evidence>
<evidence type="ECO:0000269" key="10">
    <source>
    </source>
</evidence>
<evidence type="ECO:0000303" key="11">
    <source ref="1"/>
</evidence>
<evidence type="ECO:0000305" key="12"/>
<feature type="chain" id="PRO_0000054002" description="Voltage-gated inwardly rectifying potassium channel KCNH2">
    <location>
        <begin position="1"/>
        <end position="1161"/>
    </location>
</feature>
<feature type="topological domain" description="Cytoplasmic" evidence="5">
    <location>
        <begin position="1"/>
        <end position="405"/>
    </location>
</feature>
<feature type="transmembrane region" description="Helical; Name=Segment S1" evidence="5">
    <location>
        <begin position="406"/>
        <end position="426"/>
    </location>
</feature>
<feature type="topological domain" description="Extracellular" evidence="5">
    <location>
        <begin position="427"/>
        <end position="452"/>
    </location>
</feature>
<feature type="transmembrane region" description="Helical; Name=Segment S2" evidence="5">
    <location>
        <begin position="453"/>
        <end position="473"/>
    </location>
</feature>
<feature type="topological domain" description="Cytoplasmic" evidence="5">
    <location>
        <begin position="474"/>
        <end position="497"/>
    </location>
</feature>
<feature type="transmembrane region" description="Helical; Name=Segment S3" evidence="5">
    <location>
        <begin position="498"/>
        <end position="518"/>
    </location>
</feature>
<feature type="topological domain" description="Extracellular" evidence="5">
    <location>
        <begin position="519"/>
        <end position="522"/>
    </location>
</feature>
<feature type="transmembrane region" description="Helical; Voltage-sensor; Name=Segment S4" evidence="5">
    <location>
        <begin position="523"/>
        <end position="543"/>
    </location>
</feature>
<feature type="topological domain" description="Cytoplasmic" evidence="5">
    <location>
        <begin position="544"/>
        <end position="549"/>
    </location>
</feature>
<feature type="transmembrane region" description="Helical; Name=Segment S5" evidence="5">
    <location>
        <begin position="550"/>
        <end position="570"/>
    </location>
</feature>
<feature type="topological domain" description="Extracellular" evidence="5">
    <location>
        <begin position="571"/>
        <end position="613"/>
    </location>
</feature>
<feature type="intramembrane region" description="Pore-forming; Name=Segment H5" evidence="5">
    <location>
        <begin position="614"/>
        <end position="634"/>
    </location>
</feature>
<feature type="topological domain" description="Extracellular" evidence="5">
    <location>
        <begin position="635"/>
        <end position="640"/>
    </location>
</feature>
<feature type="transmembrane region" description="Helical; Name=Segment S6" evidence="5">
    <location>
        <begin position="641"/>
        <end position="661"/>
    </location>
</feature>
<feature type="topological domain" description="Cytoplasmic" evidence="5">
    <location>
        <begin position="662"/>
        <end position="1161"/>
    </location>
</feature>
<feature type="domain" description="PAS" evidence="7">
    <location>
        <begin position="17"/>
        <end position="88"/>
    </location>
</feature>
<feature type="domain" description="PAC" evidence="8">
    <location>
        <begin position="92"/>
        <end position="144"/>
    </location>
</feature>
<feature type="region of interest" description="Disordered" evidence="9">
    <location>
        <begin position="233"/>
        <end position="286"/>
    </location>
</feature>
<feature type="region of interest" description="cNMP-binding domain" evidence="6">
    <location>
        <begin position="744"/>
        <end position="844"/>
    </location>
</feature>
<feature type="region of interest" description="Disordered" evidence="9">
    <location>
        <begin position="872"/>
        <end position="985"/>
    </location>
</feature>
<feature type="region of interest" description="Disordered" evidence="9">
    <location>
        <begin position="1121"/>
        <end position="1161"/>
    </location>
</feature>
<feature type="coiled-coil region" evidence="5">
    <location>
        <begin position="1037"/>
        <end position="1064"/>
    </location>
</feature>
<feature type="short sequence motif" description="Selectivity filter" evidence="4">
    <location>
        <begin position="626"/>
        <end position="631"/>
    </location>
</feature>
<feature type="compositionally biased region" description="Pro residues" evidence="9">
    <location>
        <begin position="239"/>
        <end position="250"/>
    </location>
</feature>
<feature type="compositionally biased region" description="Polar residues" evidence="9">
    <location>
        <begin position="260"/>
        <end position="271"/>
    </location>
</feature>
<feature type="compositionally biased region" description="Basic residues" evidence="9">
    <location>
        <begin position="885"/>
        <end position="894"/>
    </location>
</feature>
<feature type="compositionally biased region" description="Low complexity" evidence="9">
    <location>
        <begin position="930"/>
        <end position="941"/>
    </location>
</feature>
<feature type="compositionally biased region" description="Pro residues" evidence="9">
    <location>
        <begin position="962"/>
        <end position="972"/>
    </location>
</feature>
<feature type="modified residue" description="Phosphoserine" evidence="3">
    <location>
        <position position="239"/>
    </location>
</feature>
<feature type="modified residue" description="Phosphoserine" evidence="2">
    <location>
        <position position="245"/>
    </location>
</feature>
<feature type="modified residue" description="Phosphoserine" evidence="2">
    <location>
        <position position="285"/>
    </location>
</feature>
<feature type="modified residue" description="Phosphoserine" evidence="2">
    <location>
        <position position="286"/>
    </location>
</feature>
<feature type="modified residue" description="Phosphoserine" evidence="3">
    <location>
        <position position="322"/>
    </location>
</feature>
<feature type="modified residue" description="Phosphoserine" evidence="1">
    <location>
        <position position="353"/>
    </location>
</feature>
<feature type="modified residue" description="Phosphoserine" evidence="3">
    <location>
        <position position="873"/>
    </location>
</feature>
<feature type="modified residue" description="Phosphoserine" evidence="2">
    <location>
        <position position="876"/>
    </location>
</feature>
<feature type="modified residue" description="Omega-N-methylarginine" evidence="2">
    <location>
        <position position="1016"/>
    </location>
</feature>
<feature type="modified residue" description="Phosphoserine" evidence="3">
    <location>
        <position position="1139"/>
    </location>
</feature>
<feature type="glycosylation site" description="N-linked (GlcNAc...) asparagine" evidence="5">
    <location>
        <position position="600"/>
    </location>
</feature>
<feature type="splice variant" id="VSP_000971" description="In isoform 2." evidence="12">
    <location>
        <begin position="69"/>
        <end position="85"/>
    </location>
</feature>
<feature type="sequence conflict" description="In Ref. 2; AAC48723." evidence="12" ref="2">
    <original>V</original>
    <variation>A</variation>
    <location>
        <position position="411"/>
    </location>
</feature>
<feature type="sequence conflict" description="In Ref. 2; AAC48723." evidence="12" ref="2">
    <original>PE</original>
    <variation>TD</variation>
    <location>
        <begin position="445"/>
        <end position="446"/>
    </location>
</feature>
<feature type="sequence conflict" description="In Ref. 2; AAC48723." evidence="12" ref="2">
    <original>L</original>
    <variation>F</variation>
    <location>
        <position position="553"/>
    </location>
</feature>
<feature type="sequence conflict" description="In Ref. 2; AAC48723." evidence="12" ref="2">
    <original>L</original>
    <variation>C</variation>
    <location>
        <position position="561"/>
    </location>
</feature>
<dbReference type="EMBL" id="U87513">
    <property type="protein sequence ID" value="AAB68612.1"/>
    <property type="molecule type" value="mRNA"/>
</dbReference>
<dbReference type="EMBL" id="AF068736">
    <property type="protein sequence ID" value="AAC99425.1"/>
    <property type="molecule type" value="mRNA"/>
</dbReference>
<dbReference type="EMBL" id="AF105061">
    <property type="protein sequence ID" value="AAD39357.1"/>
    <property type="molecule type" value="Genomic_DNA"/>
</dbReference>
<dbReference type="EMBL" id="U75212">
    <property type="protein sequence ID" value="AAC48723.1"/>
    <property type="molecule type" value="mRNA"/>
</dbReference>
<dbReference type="RefSeq" id="NP_001075853.1">
    <molecule id="Q8WNY2-2"/>
    <property type="nucleotide sequence ID" value="NM_001082384.1"/>
</dbReference>
<dbReference type="BMRB" id="Q8WNY2"/>
<dbReference type="SMR" id="Q8WNY2"/>
<dbReference type="FunCoup" id="Q8WNY2">
    <property type="interactions" value="8"/>
</dbReference>
<dbReference type="STRING" id="9986.ENSOCUP00000017172"/>
<dbReference type="ChEMBL" id="CHEMBL2216746"/>
<dbReference type="GlyCosmos" id="Q8WNY2">
    <property type="glycosylation" value="1 site, No reported glycans"/>
</dbReference>
<dbReference type="PaxDb" id="9986-ENSOCUP00000017172"/>
<dbReference type="GeneID" id="100009242"/>
<dbReference type="KEGG" id="ocu:100009242"/>
<dbReference type="CTD" id="3757"/>
<dbReference type="eggNOG" id="KOG0498">
    <property type="taxonomic scope" value="Eukaryota"/>
</dbReference>
<dbReference type="InParanoid" id="Q8WNY2"/>
<dbReference type="OrthoDB" id="432483at2759"/>
<dbReference type="Proteomes" id="UP000001811">
    <property type="component" value="Unplaced"/>
</dbReference>
<dbReference type="GO" id="GO:0034702">
    <property type="term" value="C:monoatomic ion channel complex"/>
    <property type="evidence" value="ECO:0007669"/>
    <property type="project" value="UniProtKB-KW"/>
</dbReference>
<dbReference type="GO" id="GO:0005886">
    <property type="term" value="C:plasma membrane"/>
    <property type="evidence" value="ECO:0007669"/>
    <property type="project" value="UniProtKB-SubCell"/>
</dbReference>
<dbReference type="GO" id="GO:0005242">
    <property type="term" value="F:inward rectifier potassium channel activity"/>
    <property type="evidence" value="ECO:0007669"/>
    <property type="project" value="TreeGrafter"/>
</dbReference>
<dbReference type="GO" id="GO:0005249">
    <property type="term" value="F:voltage-gated potassium channel activity"/>
    <property type="evidence" value="ECO:0000250"/>
    <property type="project" value="UniProtKB"/>
</dbReference>
<dbReference type="GO" id="GO:0086013">
    <property type="term" value="P:membrane repolarization during cardiac muscle cell action potential"/>
    <property type="evidence" value="ECO:0007669"/>
    <property type="project" value="TreeGrafter"/>
</dbReference>
<dbReference type="GO" id="GO:0086091">
    <property type="term" value="P:regulation of heart rate by cardiac conduction"/>
    <property type="evidence" value="ECO:0007669"/>
    <property type="project" value="TreeGrafter"/>
</dbReference>
<dbReference type="GO" id="GO:0060307">
    <property type="term" value="P:regulation of ventricular cardiac muscle cell membrane repolarization"/>
    <property type="evidence" value="ECO:0007669"/>
    <property type="project" value="TreeGrafter"/>
</dbReference>
<dbReference type="CDD" id="cd00038">
    <property type="entry name" value="CAP_ED"/>
    <property type="match status" value="1"/>
</dbReference>
<dbReference type="CDD" id="cd00130">
    <property type="entry name" value="PAS"/>
    <property type="match status" value="1"/>
</dbReference>
<dbReference type="FunFam" id="1.10.287.70:FF:000020">
    <property type="entry name" value="Potassium channel, voltage-gated eag-related subfamily H, member 7"/>
    <property type="match status" value="1"/>
</dbReference>
<dbReference type="FunFam" id="2.60.120.10:FF:000011">
    <property type="entry name" value="Potassium channel, voltage-gated eag-related subfamily H, member 7"/>
    <property type="match status" value="1"/>
</dbReference>
<dbReference type="FunFam" id="1.10.1200.260:FF:000001">
    <property type="entry name" value="Potassium voltage-gated channel subfamily H member 7"/>
    <property type="match status" value="1"/>
</dbReference>
<dbReference type="FunFam" id="3.30.450.20:FF:000001">
    <property type="entry name" value="Potassium voltage-gated channel subfamily H member 7"/>
    <property type="match status" value="1"/>
</dbReference>
<dbReference type="Gene3D" id="1.10.1200.260">
    <property type="match status" value="1"/>
</dbReference>
<dbReference type="Gene3D" id="1.10.287.70">
    <property type="match status" value="1"/>
</dbReference>
<dbReference type="Gene3D" id="2.60.120.10">
    <property type="entry name" value="Jelly Rolls"/>
    <property type="match status" value="1"/>
</dbReference>
<dbReference type="Gene3D" id="3.30.450.20">
    <property type="entry name" value="PAS domain"/>
    <property type="match status" value="1"/>
</dbReference>
<dbReference type="InterPro" id="IPR000595">
    <property type="entry name" value="cNMP-bd_dom"/>
</dbReference>
<dbReference type="InterPro" id="IPR018490">
    <property type="entry name" value="cNMP-bd_dom_sf"/>
</dbReference>
<dbReference type="InterPro" id="IPR005821">
    <property type="entry name" value="Ion_trans_dom"/>
</dbReference>
<dbReference type="InterPro" id="IPR003938">
    <property type="entry name" value="K_chnl_volt-dep_EAG/ELK/ERG"/>
</dbReference>
<dbReference type="InterPro" id="IPR003967">
    <property type="entry name" value="K_chnl_volt-dep_ERG"/>
</dbReference>
<dbReference type="InterPro" id="IPR050818">
    <property type="entry name" value="KCNH_animal-type"/>
</dbReference>
<dbReference type="InterPro" id="IPR001610">
    <property type="entry name" value="PAC"/>
</dbReference>
<dbReference type="InterPro" id="IPR000014">
    <property type="entry name" value="PAS"/>
</dbReference>
<dbReference type="InterPro" id="IPR000700">
    <property type="entry name" value="PAS-assoc_C"/>
</dbReference>
<dbReference type="InterPro" id="IPR035965">
    <property type="entry name" value="PAS-like_dom_sf"/>
</dbReference>
<dbReference type="InterPro" id="IPR014710">
    <property type="entry name" value="RmlC-like_jellyroll"/>
</dbReference>
<dbReference type="NCBIfam" id="TIGR00229">
    <property type="entry name" value="sensory_box"/>
    <property type="match status" value="1"/>
</dbReference>
<dbReference type="PANTHER" id="PTHR10217:SF506">
    <property type="entry name" value="POTASSIUM VOLTAGE-GATED CHANNEL SUBFAMILY H MEMBER 2"/>
    <property type="match status" value="1"/>
</dbReference>
<dbReference type="PANTHER" id="PTHR10217">
    <property type="entry name" value="VOLTAGE AND LIGAND GATED POTASSIUM CHANNEL"/>
    <property type="match status" value="1"/>
</dbReference>
<dbReference type="Pfam" id="PF00027">
    <property type="entry name" value="cNMP_binding"/>
    <property type="match status" value="1"/>
</dbReference>
<dbReference type="Pfam" id="PF00520">
    <property type="entry name" value="Ion_trans"/>
    <property type="match status" value="1"/>
</dbReference>
<dbReference type="Pfam" id="PF13426">
    <property type="entry name" value="PAS_9"/>
    <property type="match status" value="1"/>
</dbReference>
<dbReference type="PRINTS" id="PR01463">
    <property type="entry name" value="EAGCHANLFMLY"/>
</dbReference>
<dbReference type="PRINTS" id="PR01470">
    <property type="entry name" value="ERGCHANNEL"/>
</dbReference>
<dbReference type="SMART" id="SM00100">
    <property type="entry name" value="cNMP"/>
    <property type="match status" value="1"/>
</dbReference>
<dbReference type="SMART" id="SM00086">
    <property type="entry name" value="PAC"/>
    <property type="match status" value="1"/>
</dbReference>
<dbReference type="SUPFAM" id="SSF51206">
    <property type="entry name" value="cAMP-binding domain-like"/>
    <property type="match status" value="1"/>
</dbReference>
<dbReference type="SUPFAM" id="SSF55785">
    <property type="entry name" value="PYP-like sensor domain (PAS domain)"/>
    <property type="match status" value="1"/>
</dbReference>
<dbReference type="SUPFAM" id="SSF81324">
    <property type="entry name" value="Voltage-gated potassium channels"/>
    <property type="match status" value="1"/>
</dbReference>
<dbReference type="PROSITE" id="PS50042">
    <property type="entry name" value="CNMP_BINDING_3"/>
    <property type="match status" value="1"/>
</dbReference>
<dbReference type="PROSITE" id="PS50113">
    <property type="entry name" value="PAC"/>
    <property type="match status" value="1"/>
</dbReference>
<dbReference type="PROSITE" id="PS50112">
    <property type="entry name" value="PAS"/>
    <property type="match status" value="1"/>
</dbReference>
<comment type="function">
    <text evidence="3">Pore-forming (alpha) subunit of voltage-gated inwardly rectifying potassium channel. Characterized by unusual gating kinetics by producing relatively small outward currents during membrane depolarization and large inward currents during subsequent repolarization which reflect a rapid inactivation during depolarization and quick recovery from inactivation but slow deactivation (closing) during repolarization. Channel properties are modulated by cAMP and subunit assembly. Forms a stable complex with KCNE1 or KCNE2, and that this heteromultimerization regulates inward rectifier potassium channel activity.</text>
</comment>
<comment type="catalytic activity">
    <reaction evidence="3">
        <text>K(+)(in) = K(+)(out)</text>
        <dbReference type="Rhea" id="RHEA:29463"/>
        <dbReference type="ChEBI" id="CHEBI:29103"/>
    </reaction>
</comment>
<comment type="subunit">
    <text evidence="1 3">The potassium channel is probably composed of a homo- or heterotetrameric complex of pore-forming alpha subunits that can associate with modulating beta subunits. Interacts with DNAJB12 and DNAJB14; chaperones DNAJB12 and DNAJB14 promote tetramerization (By similarity). Heteromultimer with KCNH6/ERG2 and KCNH7/ERG3 (By similarity). Interacts with ALG10B (By similarity). Forms a stable complex with KCNE1 or KCNE2, and that this heteromultimerization regulates Inward rectifier potassium channel activity. Interacts with CANX. The core-glycosylated, but not the fully glycosylated form interacts with RNF207. Interacts with NDFIP1 and NDFIP2; this interaction decreases the cell membrane expression by targeting KCNH2, through interaction with NEDD4L, for the degradation through the multivesicular bodies (MVBs)-lysosomal pathway (By similarity).</text>
</comment>
<comment type="subcellular location">
    <subcellularLocation>
        <location evidence="3">Cell membrane</location>
        <topology evidence="5">Multi-pass membrane protein</topology>
    </subcellularLocation>
</comment>
<comment type="alternative products">
    <event type="alternative splicing"/>
    <isoform>
        <id>Q8WNY2-1</id>
        <name>1</name>
        <sequence type="displayed"/>
    </isoform>
    <isoform>
        <id>Q8WNY2-2</id>
        <name>2</name>
        <sequence type="described" ref="VSP_000971"/>
    </isoform>
</comment>
<comment type="tissue specificity">
    <text evidence="10">Detected in heart, both in atrium and in left ventricle.</text>
</comment>
<comment type="domain">
    <text evidence="3">The S4-S5 linker acts as a signal integrator where it both couples voltage-sensor domain (VSD) movement to pore opening and closure, as well as providing a binding site for other domains that regulate activation and/or deactivation of the channel.</text>
</comment>
<comment type="PTM">
    <text evidence="3">Phosphorylated on serine and threonine residues. Phosphorylation by PKA inhibits ion conduction.</text>
</comment>
<comment type="similarity">
    <text evidence="12">Belongs to the potassium channel family. H (Eag) (TC 1.A.1.20) subfamily. Kv11.1/KCNH2 sub-subfamily.</text>
</comment>
<protein>
    <recommendedName>
        <fullName evidence="3">Voltage-gated inwardly rectifying potassium channel KCNH2</fullName>
    </recommendedName>
    <alternativeName>
        <fullName>Ether-a-go-go-related gene potassium channel 1</fullName>
        <shortName>ERG-1</shortName>
        <shortName>Eag-related protein 1</shortName>
        <shortName>Ether-a-go-go-related protein 1</shortName>
        <shortName evidence="11">RERG</shortName>
        <shortName>ra-erg</shortName>
    </alternativeName>
    <alternativeName>
        <fullName>Potassium voltage-gated channel subfamily H member 2</fullName>
    </alternativeName>
    <alternativeName>
        <fullName>Voltage-gated potassium channel subunit Kv11.1</fullName>
    </alternativeName>
</protein>
<organism>
    <name type="scientific">Oryctolagus cuniculus</name>
    <name type="common">Rabbit</name>
    <dbReference type="NCBI Taxonomy" id="9986"/>
    <lineage>
        <taxon>Eukaryota</taxon>
        <taxon>Metazoa</taxon>
        <taxon>Chordata</taxon>
        <taxon>Craniata</taxon>
        <taxon>Vertebrata</taxon>
        <taxon>Euteleostomi</taxon>
        <taxon>Mammalia</taxon>
        <taxon>Eutheria</taxon>
        <taxon>Euarchontoglires</taxon>
        <taxon>Glires</taxon>
        <taxon>Lagomorpha</taxon>
        <taxon>Leporidae</taxon>
        <taxon>Oryctolagus</taxon>
    </lineage>
</organism>
<keyword id="KW-0025">Alternative splicing</keyword>
<keyword id="KW-1003">Cell membrane</keyword>
<keyword id="KW-0175">Coiled coil</keyword>
<keyword id="KW-0325">Glycoprotein</keyword>
<keyword id="KW-0407">Ion channel</keyword>
<keyword id="KW-0406">Ion transport</keyword>
<keyword id="KW-0472">Membrane</keyword>
<keyword id="KW-0488">Methylation</keyword>
<keyword id="KW-0597">Phosphoprotein</keyword>
<keyword id="KW-0630">Potassium</keyword>
<keyword id="KW-0631">Potassium channel</keyword>
<keyword id="KW-0633">Potassium transport</keyword>
<keyword id="KW-1185">Reference proteome</keyword>
<keyword id="KW-0812">Transmembrane</keyword>
<keyword id="KW-1133">Transmembrane helix</keyword>
<keyword id="KW-0813">Transport</keyword>
<keyword id="KW-0851">Voltage-gated channel</keyword>
<reference key="1">
    <citation type="submission" date="1997-01" db="EMBL/GenBank/DDBJ databases">
        <title>RERG -- rabbit ventricular ERG K+ channel subunit.</title>
        <authorList>
            <person name="Witchel H.J."/>
            <person name="Hancox J.C."/>
            <person name="Levi A.J."/>
            <person name="Meech R.W."/>
        </authorList>
    </citation>
    <scope>NUCLEOTIDE SEQUENCE [GENOMIC DNA / MRNA] (ISOFORMS 1 AND 2)</scope>
</reference>
<reference key="2">
    <citation type="journal article" date="1997" name="Circ. Res.">
        <title>Tissue and species distribution of mRNA for the IKr-like K+ channel, erg.</title>
        <authorList>
            <person name="Wymore R.S."/>
            <person name="Gintant G.A."/>
            <person name="Wymore R.T."/>
            <person name="Dixon J.E."/>
            <person name="McKinnon D."/>
            <person name="Cohen I.S."/>
        </authorList>
    </citation>
    <scope>NUCLEOTIDE SEQUENCE [MRNA] OF 411-571 (ISOFORMS 1/2)</scope>
    <scope>TISSUE SPECIFICITY</scope>
</reference>
<sequence>MPVRRGHVAPQNTFLDTIIRKFEGQSRKFIIANARVENCAVIYCNDGFCELCGYSRAEVMQRPCTCDFLHGPRTQRRAAAQIAQALLGAEERKVEIAFYRKDGSCFLCLVDVVPVKNEDGAVIMFILNFEVVMEKDMVGSPARDTNHRGPPTSWLAPGRAKTFRLKLPALLALTARESSVRPGGAGGAGAPGAVVVDVDLTPAAPSSESLALDEVPAMDNHVAGLGPAEERRALVGSCSPPPPVSAPGPHPSLRAHSLNPDASGSSCSLARTRSRESCASVRRASSADDIEAMRAGALPPPPRHASTGAMHPLRSGLLNSTSDSDLVRYRTISKIPQITLNFVDLKGDPFLASPTSDREIIAPKIKERTHNVTEKVTQVLSLGADVLPEYKLQAPRIHRWTILHYSPFKAVWDWLILLLVIYTAVFTPYSAAFLLKETEEGPPAPECGYACQPLAVVDLIVDIMFIVDILINFRTTYVNANEEVVSHPGRIAVHYFKGWFLIDMVAAIPFDLLIFGSGSEELIGLLKTARLLRLVRVARKLDRYSEYGAAVLLLLMCTFALIAHWLACIWYAIGNMEQPHMDSRIGWLHNLGDQMGKPYNSSGLGGPSIKDKYVTGLYFTFSSLTSVGFGNVSPNTNSEKIFSICVMLIGSLMYASIFGNVSAIIQRLYSGTARYHTQMLRVREFIRFHQIPNPLRQRLEEYFQHAWSYTNGIDMNAVLKGFPECLQADICLHLNRSLLQHCKPFRGATKDCLRALAMKFKTTHAPPGDTLVHAGDLLTALYFISRGSIEILRGDVVVAILGKNDIFGEPLNLYARPGKSNGDVRALTYCDLHKIHRDDLLEVLDMYPEFSDHFWSSLEITFNLRDTNMIPGSPGSTEWEGGFNRQRKRKLSFRRRTDKDTEQPGEVSALGPGRAGAGPSSRGRPGGPWGESPSSGPSSPESSEDEGPGRSSSPLRLVPFSSPRPPGEPPGGEPLTEDCEKSSDTCNPLSGAFSGVSNIFSFWGDSRGRQYQELPRCPAPAPSLLNIPLSSPSRRPRGDVESRLDALQRQLNRLETRLSADMATVLQLLQRQMTLVPPAYSAVTTPGPGPTSTSPLLPVSPFPTLTLDSLSQVSQFMACEELPPGAPELPQEGPTRRLSLPGQLGALTSQPLHRHGSDPGS</sequence>